<organism>
    <name type="scientific">Homo sapiens</name>
    <name type="common">Human</name>
    <dbReference type="NCBI Taxonomy" id="9606"/>
    <lineage>
        <taxon>Eukaryota</taxon>
        <taxon>Metazoa</taxon>
        <taxon>Chordata</taxon>
        <taxon>Craniata</taxon>
        <taxon>Vertebrata</taxon>
        <taxon>Euteleostomi</taxon>
        <taxon>Mammalia</taxon>
        <taxon>Eutheria</taxon>
        <taxon>Euarchontoglires</taxon>
        <taxon>Primates</taxon>
        <taxon>Haplorrhini</taxon>
        <taxon>Catarrhini</taxon>
        <taxon>Hominidae</taxon>
        <taxon>Homo</taxon>
    </lineage>
</organism>
<accession>Q9NV88</accession>
<accession>B7Z560</accession>
<accession>B7Z6M5</accession>
<accession>O00224</accession>
<accession>Q8TB16</accession>
<comment type="function">
    <text evidence="5 6 7 8 9 12 13 14 18">Component of the integrator complex, a multiprotein complex that terminates RNA polymerase II (Pol II) transcription in the promoter-proximal region of genes (PubMed:25201415, PubMed:33243860, PubMed:33548203, PubMed:38570683). The integrator complex provides a quality checkpoint during transcription elongation by driving premature transcription termination of transcripts that are unfavorably configured for transcriptional elongation: the complex terminates transcription by (1) catalyzing dephosphorylation of the C-terminal domain (CTD) of Pol II subunit POLR2A/RPB1 and SUPT5H/SPT5, (2) degrading the exiting nascent RNA transcript via endonuclease activity and (3) promoting the release of Pol II from bound DNA (PubMed:33243860, PubMed:38570683). The integrator complex is also involved in terminating the synthesis of non-coding Pol II transcripts, such as enhancer RNAs (eRNAs), small nuclear RNAs (snRNAs), telomerase RNAs and long non-coding RNAs (lncRNAs) (PubMed:16239144, PubMed:22252320, PubMed:26308897, PubMed:30737432). Mediates recruitment of cytoplasmic dynein to the nuclear envelope, probably as component of the integrator complex (PubMed:23904267).</text>
</comment>
<comment type="subunit">
    <text evidence="1 5 8 11 13 14 15 16 17 18 19 20">Component of the Integrator complex, composed of core subunits INTS1, INTS2, INTS3, INTS4, INTS5, INTS6, INTS7, INTS8, INTS9/RC74, INTS10, INTS11/CPSF3L, INTS12, INTS13, INTS14 and INTS15 (PubMed:16239144, PubMed:25201415, PubMed:33243860, PubMed:33548203, PubMed:34762484, PubMed:38570683, PubMed:39032490). The core complex associates with protein phosphatase 2A subunits PPP2CA and PPP2R1A, to form the Integrator-PP2A (INTAC) complex (PubMed:33243860, PubMed:34762484, PubMed:36869814, PubMed:38570683). INTS9 is part of the RNA endonuclease subcomplex, composed of INTS4, INTS9, INTS11 and inositol hexakisphosphate (InsP6) (PubMed:29471365, PubMed:33548203). Interacts with WDR73; interaction is required for the assembly of the RNA endonuclease subcomplex in the cytoplasm (PubMed:33686175, PubMed:39032489). Interacts with BRAT1; interaction is required for the assembly of the RNA endonuclease subcomplex (PubMed:39032489, PubMed:39032490). Interacts with ESRRB, ESRRB is not a core component of the Integrator complex and this association is a bridge for the interaction with the multiprotein complex Integrator; attracts the transcriptional machinery (By similarity).</text>
</comment>
<comment type="interaction">
    <interactant intactId="EBI-2866634">
        <id>Q9NV88</id>
    </interactant>
    <interactant intactId="EBI-748258">
        <id>Q5TA45</id>
        <label>INTS11</label>
    </interactant>
    <organismsDiffer>false</organismsDiffer>
    <experiments>22</experiments>
</comment>
<comment type="interaction">
    <interactant intactId="EBI-2866634">
        <id>Q9NV88</id>
    </interactant>
    <interactant intactId="EBI-5663129">
        <id>Q96HW7</id>
        <label>INTS4</label>
    </interactant>
    <organismsDiffer>false</organismsDiffer>
    <experiments>5</experiments>
</comment>
<comment type="subcellular location">
    <subcellularLocation>
        <location evidence="4 7 11 19 20">Nucleus</location>
    </subcellularLocation>
    <subcellularLocation>
        <location evidence="11 19 20">Cytoplasm</location>
    </subcellularLocation>
</comment>
<comment type="alternative products">
    <event type="alternative splicing"/>
    <isoform>
        <id>Q9NV88-1</id>
        <name>1</name>
        <sequence type="displayed"/>
    </isoform>
    <isoform>
        <id>Q9NV88-2</id>
        <name>2</name>
        <sequence type="described" ref="VSP_043011"/>
    </isoform>
    <isoform>
        <id>Q9NV88-3</id>
        <name>3</name>
        <sequence type="described" ref="VSP_044306"/>
    </isoform>
</comment>
<comment type="miscellaneous">
    <text>Although strongly related to RNA-specific endonuclease proteins, it lacks the HXHXDH motif that binds zinc and participates in the catalytic center. Its function as endonuclease is therefore unsure.</text>
</comment>
<comment type="similarity">
    <text evidence="24">Belongs to the metallo-beta-lactamase superfamily. RNA-metabolizing metallo-beta-lactamase-like family. INTS9 subfamily.</text>
</comment>
<comment type="sequence caution" evidence="24">
    <conflict type="erroneous gene model prediction">
        <sequence resource="EMBL-CDS" id="AAB67601"/>
    </conflict>
</comment>
<keyword id="KW-0002">3D-structure</keyword>
<keyword id="KW-0025">Alternative splicing</keyword>
<keyword id="KW-0963">Cytoplasm</keyword>
<keyword id="KW-1017">Isopeptide bond</keyword>
<keyword id="KW-0539">Nucleus</keyword>
<keyword id="KW-1267">Proteomics identification</keyword>
<keyword id="KW-1185">Reference proteome</keyword>
<keyword id="KW-0832">Ubl conjugation</keyword>
<proteinExistence type="evidence at protein level"/>
<feature type="chain" id="PRO_0000259557" description="Integrator complex subunit 9">
    <location>
        <begin position="1"/>
        <end position="658"/>
    </location>
</feature>
<feature type="region of interest" description="Disordered" evidence="3">
    <location>
        <begin position="548"/>
        <end position="574"/>
    </location>
</feature>
<feature type="short sequence motif" description="Nuclear localization signal" evidence="19">
    <location>
        <begin position="566"/>
        <end position="570"/>
    </location>
</feature>
<feature type="binding site" evidence="2">
    <location>
        <position position="2"/>
    </location>
    <ligand>
        <name>1D-myo-inositol hexakisphosphate</name>
        <dbReference type="ChEBI" id="CHEBI:58130"/>
    </ligand>
</feature>
<feature type="binding site" evidence="2">
    <location>
        <position position="19"/>
    </location>
    <ligand>
        <name>1D-myo-inositol hexakisphosphate</name>
        <dbReference type="ChEBI" id="CHEBI:58130"/>
    </ligand>
</feature>
<feature type="binding site" evidence="2">
    <location>
        <position position="510"/>
    </location>
    <ligand>
        <name>1D-myo-inositol hexakisphosphate</name>
        <dbReference type="ChEBI" id="CHEBI:58130"/>
    </ligand>
</feature>
<feature type="binding site" evidence="2">
    <location>
        <position position="511"/>
    </location>
    <ligand>
        <name>1D-myo-inositol hexakisphosphate</name>
        <dbReference type="ChEBI" id="CHEBI:58130"/>
    </ligand>
</feature>
<feature type="cross-link" description="Glycyl lysine isopeptide (Lys-Gly) (interchain with G-Cter in SUMO2)" evidence="39">
    <location>
        <position position="58"/>
    </location>
</feature>
<feature type="splice variant" id="VSP_044306" description="In isoform 3." evidence="21">
    <location>
        <begin position="1"/>
        <end position="24"/>
    </location>
</feature>
<feature type="splice variant" id="VSP_043011" description="In isoform 2." evidence="21">
    <location>
        <begin position="67"/>
        <end position="87"/>
    </location>
</feature>
<feature type="mutagenesis site" description="Abolished interaction with BRAT1." evidence="20">
    <original>EFCSNLALTVR</original>
    <variation>RFCMNLAATVA</variation>
    <location>
        <begin position="280"/>
        <end position="290"/>
    </location>
</feature>
<feature type="mutagenesis site" description="Abolished interaction with BRAT1." evidence="20">
    <original>S</original>
    <variation>M</variation>
    <location>
        <position position="283"/>
    </location>
</feature>
<feature type="mutagenesis site" description="Decreased interaction with INTS11 and BRAT1." evidence="19">
    <original>S</original>
    <variation>R</variation>
    <location>
        <position position="283"/>
    </location>
</feature>
<feature type="mutagenesis site" description="Decreased localization in the nucleus." evidence="19">
    <original>KKRKR</original>
    <variation>SSSSS</variation>
    <location>
        <begin position="566"/>
        <end position="570"/>
    </location>
</feature>
<feature type="mutagenesis site" description="Abolished interaction with INTS11." evidence="10">
    <original>THI</original>
    <variation>PHP</variation>
    <location>
        <begin position="633"/>
        <end position="635"/>
    </location>
</feature>
<feature type="mutagenesis site" description="Abolished interaction with INTS11." evidence="10">
    <original>RVRLR</original>
    <variation>EVRLE</variation>
    <location>
        <begin position="644"/>
        <end position="648"/>
    </location>
</feature>
<feature type="mutagenesis site" description="Abolished interaction with INTS11." evidence="10">
    <original>R</original>
    <variation>E</variation>
    <location>
        <position position="644"/>
    </location>
</feature>
<feature type="sequence conflict" description="In Ref. 1; BAA91867." evidence="24" ref="1">
    <original>V</original>
    <variation>A</variation>
    <location>
        <position position="324"/>
    </location>
</feature>
<feature type="strand" evidence="43">
    <location>
        <begin position="2"/>
        <end position="5"/>
    </location>
</feature>
<feature type="strand" evidence="43">
    <location>
        <begin position="10"/>
        <end position="12"/>
    </location>
</feature>
<feature type="strand" evidence="43">
    <location>
        <begin position="15"/>
        <end position="19"/>
    </location>
</feature>
<feature type="strand" evidence="43">
    <location>
        <begin position="22"/>
        <end position="26"/>
    </location>
</feature>
<feature type="helix" evidence="43">
    <location>
        <begin position="32"/>
        <end position="37"/>
    </location>
</feature>
<feature type="strand" evidence="41">
    <location>
        <begin position="39"/>
        <end position="41"/>
    </location>
</feature>
<feature type="helix" evidence="43">
    <location>
        <begin position="47"/>
        <end position="50"/>
    </location>
</feature>
<feature type="turn" evidence="41">
    <location>
        <begin position="55"/>
        <end position="57"/>
    </location>
</feature>
<feature type="strand" evidence="41">
    <location>
        <begin position="63"/>
        <end position="65"/>
    </location>
</feature>
<feature type="strand" evidence="43">
    <location>
        <begin position="66"/>
        <end position="71"/>
    </location>
</feature>
<feature type="strand" evidence="43">
    <location>
        <begin position="74"/>
        <end position="79"/>
    </location>
</feature>
<feature type="strand" evidence="43">
    <location>
        <begin position="89"/>
        <end position="91"/>
    </location>
</feature>
<feature type="helix" evidence="43">
    <location>
        <begin position="93"/>
        <end position="95"/>
    </location>
</feature>
<feature type="strand" evidence="43">
    <location>
        <begin position="98"/>
        <end position="100"/>
    </location>
</feature>
<feature type="turn" evidence="43">
    <location>
        <begin position="105"/>
        <end position="109"/>
    </location>
</feature>
<feature type="helix" evidence="43">
    <location>
        <begin position="110"/>
        <end position="116"/>
    </location>
</feature>
<feature type="strand" evidence="43">
    <location>
        <begin position="121"/>
        <end position="125"/>
    </location>
</feature>
<feature type="helix" evidence="43">
    <location>
        <begin position="127"/>
        <end position="146"/>
    </location>
</feature>
<feature type="helix" evidence="43">
    <location>
        <begin position="155"/>
        <end position="157"/>
    </location>
</feature>
<feature type="helix" evidence="43">
    <location>
        <begin position="159"/>
        <end position="162"/>
    </location>
</feature>
<feature type="helix" evidence="43">
    <location>
        <begin position="167"/>
        <end position="170"/>
    </location>
</feature>
<feature type="helix" evidence="43">
    <location>
        <begin position="175"/>
        <end position="177"/>
    </location>
</feature>
<feature type="helix" evidence="43">
    <location>
        <begin position="184"/>
        <end position="191"/>
    </location>
</feature>
<feature type="strand" evidence="43">
    <location>
        <begin position="194"/>
        <end position="196"/>
    </location>
</feature>
<feature type="strand" evidence="43">
    <location>
        <begin position="203"/>
        <end position="205"/>
    </location>
</feature>
<feature type="turn" evidence="43">
    <location>
        <begin position="206"/>
        <end position="208"/>
    </location>
</feature>
<feature type="strand" evidence="43">
    <location>
        <begin position="209"/>
        <end position="215"/>
    </location>
</feature>
<feature type="strand" evidence="43">
    <location>
        <begin position="217"/>
        <end position="219"/>
    </location>
</feature>
<feature type="strand" evidence="43">
    <location>
        <begin position="223"/>
        <end position="228"/>
    </location>
</feature>
<feature type="strand" evidence="43">
    <location>
        <begin position="233"/>
        <end position="237"/>
    </location>
</feature>
<feature type="helix" evidence="43">
    <location>
        <begin position="253"/>
        <end position="255"/>
    </location>
</feature>
<feature type="strand" evidence="43">
    <location>
        <begin position="259"/>
        <end position="263"/>
    </location>
</feature>
<feature type="helix" evidence="43">
    <location>
        <begin position="274"/>
        <end position="290"/>
    </location>
</feature>
<feature type="strand" evidence="41">
    <location>
        <begin position="291"/>
        <end position="293"/>
    </location>
</feature>
<feature type="strand" evidence="43">
    <location>
        <begin position="295"/>
        <end position="298"/>
    </location>
</feature>
<feature type="strand" evidence="43">
    <location>
        <begin position="301"/>
        <end position="303"/>
    </location>
</feature>
<feature type="helix" evidence="43">
    <location>
        <begin position="305"/>
        <end position="319"/>
    </location>
</feature>
<feature type="strand" evidence="43">
    <location>
        <begin position="326"/>
        <end position="329"/>
    </location>
</feature>
<feature type="helix" evidence="43">
    <location>
        <begin position="333"/>
        <end position="342"/>
    </location>
</feature>
<feature type="helix" evidence="43">
    <location>
        <begin position="349"/>
        <end position="352"/>
    </location>
</feature>
<feature type="helix" evidence="43">
    <location>
        <begin position="353"/>
        <end position="355"/>
    </location>
</feature>
<feature type="turn" evidence="43">
    <location>
        <begin position="356"/>
        <end position="358"/>
    </location>
</feature>
<feature type="strand" evidence="41">
    <location>
        <begin position="360"/>
        <end position="362"/>
    </location>
</feature>
<feature type="helix" evidence="43">
    <location>
        <begin position="364"/>
        <end position="369"/>
    </location>
</feature>
<feature type="strand" evidence="43">
    <location>
        <begin position="373"/>
        <end position="377"/>
    </location>
</feature>
<feature type="turn" evidence="43">
    <location>
        <begin position="380"/>
        <end position="382"/>
    </location>
</feature>
<feature type="helix" evidence="43">
    <location>
        <begin position="383"/>
        <end position="386"/>
    </location>
</feature>
<feature type="strand" evidence="43">
    <location>
        <begin position="392"/>
        <end position="396"/>
    </location>
</feature>
<feature type="strand" evidence="43">
    <location>
        <begin position="400"/>
        <end position="403"/>
    </location>
</feature>
<feature type="helix" evidence="43">
    <location>
        <begin position="404"/>
        <end position="412"/>
    </location>
</feature>
<feature type="strand" evidence="41">
    <location>
        <begin position="415"/>
        <end position="417"/>
    </location>
</feature>
<feature type="strand" evidence="43">
    <location>
        <begin position="419"/>
        <end position="422"/>
    </location>
</feature>
<feature type="helix" evidence="43">
    <location>
        <begin position="429"/>
        <end position="432"/>
    </location>
</feature>
<feature type="helix" evidence="43">
    <location>
        <begin position="434"/>
        <end position="436"/>
    </location>
</feature>
<feature type="strand" evidence="43">
    <location>
        <begin position="442"/>
        <end position="445"/>
    </location>
</feature>
<feature type="helix" evidence="43">
    <location>
        <begin position="454"/>
        <end position="464"/>
    </location>
</feature>
<feature type="strand" evidence="43">
    <location>
        <begin position="467"/>
        <end position="472"/>
    </location>
</feature>
<feature type="helix" evidence="43">
    <location>
        <begin position="473"/>
        <end position="476"/>
    </location>
</feature>
<feature type="turn" evidence="43">
    <location>
        <begin position="480"/>
        <end position="482"/>
    </location>
</feature>
<feature type="strand" evidence="42">
    <location>
        <begin position="486"/>
        <end position="489"/>
    </location>
</feature>
<feature type="strand" evidence="43">
    <location>
        <begin position="503"/>
        <end position="506"/>
    </location>
</feature>
<feature type="strand" evidence="43">
    <location>
        <begin position="514"/>
        <end position="518"/>
    </location>
</feature>
<feature type="helix" evidence="43">
    <location>
        <begin position="520"/>
        <end position="525"/>
    </location>
</feature>
<feature type="strand" evidence="43">
    <location>
        <begin position="528"/>
        <end position="530"/>
    </location>
</feature>
<feature type="strand" evidence="43">
    <location>
        <begin position="536"/>
        <end position="547"/>
    </location>
</feature>
<feature type="strand" evidence="43">
    <location>
        <begin position="550"/>
        <end position="554"/>
    </location>
</feature>
<feature type="helix" evidence="40">
    <location>
        <begin position="591"/>
        <end position="600"/>
    </location>
</feature>
<feature type="strand" evidence="40">
    <location>
        <begin position="607"/>
        <end position="610"/>
    </location>
</feature>
<feature type="strand" evidence="40">
    <location>
        <begin position="612"/>
        <end position="619"/>
    </location>
</feature>
<feature type="helix" evidence="40">
    <location>
        <begin position="621"/>
        <end position="623"/>
    </location>
</feature>
<feature type="strand" evidence="40">
    <location>
        <begin position="624"/>
        <end position="629"/>
    </location>
</feature>
<feature type="strand" evidence="40">
    <location>
        <begin position="632"/>
        <end position="639"/>
    </location>
</feature>
<feature type="helix" evidence="40">
    <location>
        <begin position="641"/>
        <end position="652"/>
    </location>
</feature>
<feature type="strand" evidence="40">
    <location>
        <begin position="655"/>
        <end position="657"/>
    </location>
</feature>
<name>INT9_HUMAN</name>
<sequence>MKLYCLSGHPTLPCNVLKFKSTTIMLDCGLDMTSTLNFLPLPLVQSPRLSNLPGWSLKDGNAFLDKELKECSGHVFVDSVPEFCLPETELIDLSTVDVILISNYHCMMALPYITEHTGFTGTVYATEPTVQIGRLLMEELVNFIERVPKAQSASLWKNKDIQRLLPSPLKDAVEVSTWRRCYTMQEVNSALSKIQLVGYSQKIELFGAVQVTPLSSGYALGSSNWIIQSHYEKVSYVSGSSLLTTHPQPMDQASLKNSDVLVLTGLTQIPTANPDGMVGEFCSNLALTVRNGGNVLVPCYPSGVIYDLLECLYQYIDSAGLSSVPLYFISPVANSSLEFSQIFAEWLCHNKQSKVYLPEPPFPHAELIQTNKLKHYPSIHGDFSNDFRQPCVVFTGHPSLRFGDVVHFMELWGKSSLNTVIFTEPDFSYLEALAPYQPLAMKCIYCPIDTRLNFIQVSKLLKEVQPLHVVCPEQYTQPPPAQSHRMDLMIDCQPPAMSYRRAEVLALPFKRRYEKIEIMPELADSLVPMEIKPGISLATVSAVLHTKDNKHLLQPPPRPAQPTSGKKRKRVSDDVPDCKVLKPLLSGSIPVEQFVQTLEKHGFSDIKVEDTAKGHIVLLQEAETLIQIEEDSTHIICDNDEMLRVRLRDLVLKFLQKF</sequence>
<reference key="1">
    <citation type="journal article" date="2004" name="Nat. Genet.">
        <title>Complete sequencing and characterization of 21,243 full-length human cDNAs.</title>
        <authorList>
            <person name="Ota T."/>
            <person name="Suzuki Y."/>
            <person name="Nishikawa T."/>
            <person name="Otsuki T."/>
            <person name="Sugiyama T."/>
            <person name="Irie R."/>
            <person name="Wakamatsu A."/>
            <person name="Hayashi K."/>
            <person name="Sato H."/>
            <person name="Nagai K."/>
            <person name="Kimura K."/>
            <person name="Makita H."/>
            <person name="Sekine M."/>
            <person name="Obayashi M."/>
            <person name="Nishi T."/>
            <person name="Shibahara T."/>
            <person name="Tanaka T."/>
            <person name="Ishii S."/>
            <person name="Yamamoto J."/>
            <person name="Saito K."/>
            <person name="Kawai Y."/>
            <person name="Isono Y."/>
            <person name="Nakamura Y."/>
            <person name="Nagahari K."/>
            <person name="Murakami K."/>
            <person name="Yasuda T."/>
            <person name="Iwayanagi T."/>
            <person name="Wagatsuma M."/>
            <person name="Shiratori A."/>
            <person name="Sudo H."/>
            <person name="Hosoiri T."/>
            <person name="Kaku Y."/>
            <person name="Kodaira H."/>
            <person name="Kondo H."/>
            <person name="Sugawara M."/>
            <person name="Takahashi M."/>
            <person name="Kanda K."/>
            <person name="Yokoi T."/>
            <person name="Furuya T."/>
            <person name="Kikkawa E."/>
            <person name="Omura Y."/>
            <person name="Abe K."/>
            <person name="Kamihara K."/>
            <person name="Katsuta N."/>
            <person name="Sato K."/>
            <person name="Tanikawa M."/>
            <person name="Yamazaki M."/>
            <person name="Ninomiya K."/>
            <person name="Ishibashi T."/>
            <person name="Yamashita H."/>
            <person name="Murakawa K."/>
            <person name="Fujimori K."/>
            <person name="Tanai H."/>
            <person name="Kimata M."/>
            <person name="Watanabe M."/>
            <person name="Hiraoka S."/>
            <person name="Chiba Y."/>
            <person name="Ishida S."/>
            <person name="Ono Y."/>
            <person name="Takiguchi S."/>
            <person name="Watanabe S."/>
            <person name="Yosida M."/>
            <person name="Hotuta T."/>
            <person name="Kusano J."/>
            <person name="Kanehori K."/>
            <person name="Takahashi-Fujii A."/>
            <person name="Hara H."/>
            <person name="Tanase T.-O."/>
            <person name="Nomura Y."/>
            <person name="Togiya S."/>
            <person name="Komai F."/>
            <person name="Hara R."/>
            <person name="Takeuchi K."/>
            <person name="Arita M."/>
            <person name="Imose N."/>
            <person name="Musashino K."/>
            <person name="Yuuki H."/>
            <person name="Oshima A."/>
            <person name="Sasaki N."/>
            <person name="Aotsuka S."/>
            <person name="Yoshikawa Y."/>
            <person name="Matsunawa H."/>
            <person name="Ichihara T."/>
            <person name="Shiohata N."/>
            <person name="Sano S."/>
            <person name="Moriya S."/>
            <person name="Momiyama H."/>
            <person name="Satoh N."/>
            <person name="Takami S."/>
            <person name="Terashima Y."/>
            <person name="Suzuki O."/>
            <person name="Nakagawa S."/>
            <person name="Senoh A."/>
            <person name="Mizoguchi H."/>
            <person name="Goto Y."/>
            <person name="Shimizu F."/>
            <person name="Wakebe H."/>
            <person name="Hishigaki H."/>
            <person name="Watanabe T."/>
            <person name="Sugiyama A."/>
            <person name="Takemoto M."/>
            <person name="Kawakami B."/>
            <person name="Yamazaki M."/>
            <person name="Watanabe K."/>
            <person name="Kumagai A."/>
            <person name="Itakura S."/>
            <person name="Fukuzumi Y."/>
            <person name="Fujimori Y."/>
            <person name="Komiyama M."/>
            <person name="Tashiro H."/>
            <person name="Tanigami A."/>
            <person name="Fujiwara T."/>
            <person name="Ono T."/>
            <person name="Yamada K."/>
            <person name="Fujii Y."/>
            <person name="Ozaki K."/>
            <person name="Hirao M."/>
            <person name="Ohmori Y."/>
            <person name="Kawabata A."/>
            <person name="Hikiji T."/>
            <person name="Kobatake N."/>
            <person name="Inagaki H."/>
            <person name="Ikema Y."/>
            <person name="Okamoto S."/>
            <person name="Okitani R."/>
            <person name="Kawakami T."/>
            <person name="Noguchi S."/>
            <person name="Itoh T."/>
            <person name="Shigeta K."/>
            <person name="Senba T."/>
            <person name="Matsumura K."/>
            <person name="Nakajima Y."/>
            <person name="Mizuno T."/>
            <person name="Morinaga M."/>
            <person name="Sasaki M."/>
            <person name="Togashi T."/>
            <person name="Oyama M."/>
            <person name="Hata H."/>
            <person name="Watanabe M."/>
            <person name="Komatsu T."/>
            <person name="Mizushima-Sugano J."/>
            <person name="Satoh T."/>
            <person name="Shirai Y."/>
            <person name="Takahashi Y."/>
            <person name="Nakagawa K."/>
            <person name="Okumura K."/>
            <person name="Nagase T."/>
            <person name="Nomura N."/>
            <person name="Kikuchi H."/>
            <person name="Masuho Y."/>
            <person name="Yamashita R."/>
            <person name="Nakai K."/>
            <person name="Yada T."/>
            <person name="Nakamura Y."/>
            <person name="Ohara O."/>
            <person name="Isogai T."/>
            <person name="Sugano S."/>
        </authorList>
    </citation>
    <scope>NUCLEOTIDE SEQUENCE [LARGE SCALE MRNA] (ISOFORMS 1; 2 AND 3)</scope>
</reference>
<reference key="2">
    <citation type="journal article" date="2006" name="Nature">
        <title>DNA sequence and analysis of human chromosome 8.</title>
        <authorList>
            <person name="Nusbaum C."/>
            <person name="Mikkelsen T.S."/>
            <person name="Zody M.C."/>
            <person name="Asakawa S."/>
            <person name="Taudien S."/>
            <person name="Garber M."/>
            <person name="Kodira C.D."/>
            <person name="Schueler M.G."/>
            <person name="Shimizu A."/>
            <person name="Whittaker C.A."/>
            <person name="Chang J.L."/>
            <person name="Cuomo C.A."/>
            <person name="Dewar K."/>
            <person name="FitzGerald M.G."/>
            <person name="Yang X."/>
            <person name="Allen N.R."/>
            <person name="Anderson S."/>
            <person name="Asakawa T."/>
            <person name="Blechschmidt K."/>
            <person name="Bloom T."/>
            <person name="Borowsky M.L."/>
            <person name="Butler J."/>
            <person name="Cook A."/>
            <person name="Corum B."/>
            <person name="DeArellano K."/>
            <person name="DeCaprio D."/>
            <person name="Dooley K.T."/>
            <person name="Dorris L. III"/>
            <person name="Engels R."/>
            <person name="Gloeckner G."/>
            <person name="Hafez N."/>
            <person name="Hagopian D.S."/>
            <person name="Hall J.L."/>
            <person name="Ishikawa S.K."/>
            <person name="Jaffe D.B."/>
            <person name="Kamat A."/>
            <person name="Kudoh J."/>
            <person name="Lehmann R."/>
            <person name="Lokitsang T."/>
            <person name="Macdonald P."/>
            <person name="Major J.E."/>
            <person name="Matthews C.D."/>
            <person name="Mauceli E."/>
            <person name="Menzel U."/>
            <person name="Mihalev A.H."/>
            <person name="Minoshima S."/>
            <person name="Murayama Y."/>
            <person name="Naylor J.W."/>
            <person name="Nicol R."/>
            <person name="Nguyen C."/>
            <person name="O'Leary S.B."/>
            <person name="O'Neill K."/>
            <person name="Parker S.C.J."/>
            <person name="Polley A."/>
            <person name="Raymond C.K."/>
            <person name="Reichwald K."/>
            <person name="Rodriguez J."/>
            <person name="Sasaki T."/>
            <person name="Schilhabel M."/>
            <person name="Siddiqui R."/>
            <person name="Smith C.L."/>
            <person name="Sneddon T.P."/>
            <person name="Talamas J.A."/>
            <person name="Tenzin P."/>
            <person name="Topham K."/>
            <person name="Venkataraman V."/>
            <person name="Wen G."/>
            <person name="Yamazaki S."/>
            <person name="Young S.K."/>
            <person name="Zeng Q."/>
            <person name="Zimmer A.R."/>
            <person name="Rosenthal A."/>
            <person name="Birren B.W."/>
            <person name="Platzer M."/>
            <person name="Shimizu N."/>
            <person name="Lander E.S."/>
        </authorList>
    </citation>
    <scope>NUCLEOTIDE SEQUENCE [LARGE SCALE GENOMIC DNA]</scope>
</reference>
<reference key="3">
    <citation type="journal article" date="2004" name="Genome Res.">
        <title>The status, quality, and expansion of the NIH full-length cDNA project: the Mammalian Gene Collection (MGC).</title>
        <authorList>
            <consortium name="The MGC Project Team"/>
        </authorList>
    </citation>
    <scope>NUCLEOTIDE SEQUENCE [LARGE SCALE MRNA] (ISOFORM 1)</scope>
    <source>
        <tissue>Brain</tissue>
    </source>
</reference>
<reference key="4">
    <citation type="submission" date="1997-04" db="EMBL/GenBank/DDBJ databases">
        <title>Human chromosome 8 BAC clone CIT987SK-2A8 complete sequence.</title>
        <authorList>
            <person name="Adams M.D."/>
        </authorList>
    </citation>
    <scope>NUCLEOTIDE SEQUENCE [LARGE SCALE GENOMIC DNA] OF 163-658</scope>
</reference>
<reference key="5">
    <citation type="journal article" date="2005" name="Cell">
        <title>Integrator, a multiprotein mediator of small nuclear RNA processing, associates with the C-terminal repeat of RNA polymerase II.</title>
        <authorList>
            <person name="Baillat D."/>
            <person name="Hakimi M.-A."/>
            <person name="Naeaer A.M."/>
            <person name="Shilatifard A."/>
            <person name="Cooch N."/>
            <person name="Shiekhattar R."/>
        </authorList>
    </citation>
    <scope>FUNCTION</scope>
    <scope>IDENTIFICATION BY MASS SPECTROMETRY</scope>
    <scope>IDENTIFICATION IN THE INTEGRATOR COMPLEX</scope>
</reference>
<reference key="6">
    <citation type="journal article" date="2005" name="Mol. Cell. Biol.">
        <title>A CPSF-73 homologue is required for cell cycle progression but not cell growth and interacts with a protein having features of CPSF-100.</title>
        <authorList>
            <person name="Dominski Z."/>
            <person name="Yang X.-C."/>
            <person name="Purdy M."/>
            <person name="Wagner E.J."/>
            <person name="Marzluff W.F."/>
        </authorList>
    </citation>
    <scope>IDENTIFICATION</scope>
    <scope>SUBCELLULAR LOCATION</scope>
    <scope>INTERACTION WITH CPSF3L</scope>
</reference>
<reference key="7">
    <citation type="journal article" date="2012" name="Mol. Cell. Biol.">
        <title>snRNA 3' end formation requires heterodimeric association of integrator subunits.</title>
        <authorList>
            <person name="Albrecht T.R."/>
            <person name="Wagner E.J."/>
        </authorList>
    </citation>
    <scope>FUNCTION</scope>
</reference>
<reference key="8">
    <citation type="journal article" date="2013" name="Mol. Biol. Cell">
        <title>Nuclear-localized Asunder regulates cytoplasmic dynein localization via its role in the integrator complex.</title>
        <authorList>
            <person name="Jodoin J.N."/>
            <person name="Sitaram P."/>
            <person name="Albrecht T.R."/>
            <person name="May S.B."/>
            <person name="Shboul M."/>
            <person name="Lee E."/>
            <person name="Reversade B."/>
            <person name="Wagner E.J."/>
            <person name="Lee L.A."/>
        </authorList>
    </citation>
    <scope>FUNCTION</scope>
    <scope>SUBCELLULAR LOCATION</scope>
</reference>
<reference key="9">
    <citation type="journal article" date="2014" name="Mol. Cell">
        <title>Integrator regulates transcriptional initiation and pause release following activation.</title>
        <authorList>
            <person name="Gardini A."/>
            <person name="Baillat D."/>
            <person name="Cesaroni M."/>
            <person name="Hu D."/>
            <person name="Marinis J.M."/>
            <person name="Wagner E.J."/>
            <person name="Lazar M.A."/>
            <person name="Shilatifard A."/>
            <person name="Shiekhattar R."/>
        </authorList>
    </citation>
    <scope>FUNCTION</scope>
    <scope>IDENTIFICATION IN THE INTEGRATOR COMPLEX</scope>
</reference>
<reference key="10">
    <citation type="journal article" date="2015" name="Nature">
        <title>Integrator mediates the biogenesis of enhancer RNAs.</title>
        <authorList>
            <person name="Lai F."/>
            <person name="Gardini A."/>
            <person name="Zhang A."/>
            <person name="Shiekhattar R."/>
        </authorList>
    </citation>
    <scope>FUNCTION</scope>
</reference>
<reference key="11">
    <citation type="journal article" date="2017" name="Nat. Struct. Mol. Biol.">
        <title>Site-specific mapping of the human SUMO proteome reveals co-modification with phosphorylation.</title>
        <authorList>
            <person name="Hendriks I.A."/>
            <person name="Lyon D."/>
            <person name="Young C."/>
            <person name="Jensen L.J."/>
            <person name="Vertegaal A.C."/>
            <person name="Nielsen M.L."/>
        </authorList>
    </citation>
    <scope>SUMOYLATION [LARGE SCALE ANALYSIS] AT LYS-58</scope>
    <scope>IDENTIFICATION BY MASS SPECTROMETRY [LARGE SCALE ANALYSIS]</scope>
</reference>
<reference key="12">
    <citation type="journal article" date="2018" name="Nucleic Acids Res.">
        <title>Integrator subunit 4 is a 'Symplekin-like' scaffold that associates with INTS9/11 to form the Integrator cleavage module.</title>
        <authorList>
            <person name="Albrecht T.R."/>
            <person name="Shevtsov S.P."/>
            <person name="Wu Y."/>
            <person name="Mascibroda L.G."/>
            <person name="Peart N.J."/>
            <person name="Huang K.L."/>
            <person name="Sawyer I.A."/>
            <person name="Tong L."/>
            <person name="Dundr M."/>
            <person name="Wagner E.J."/>
        </authorList>
    </citation>
    <scope>SUBCELLULAR LOCATION</scope>
    <scope>IDENTIFICATION IN THE INTEGRATOR COMPLEX</scope>
</reference>
<reference key="13">
    <citation type="journal article" date="2019" name="Sci. Rep.">
        <title>Integrator is a key component of human telomerase RNA biogenesis.</title>
        <authorList>
            <person name="Rubtsova M.P."/>
            <person name="Vasilkova D.P."/>
            <person name="Moshareva M.A."/>
            <person name="Malyavko A.N."/>
            <person name="Meerson M.B."/>
            <person name="Zatsepin T.S."/>
            <person name="Naraykina Y.V."/>
            <person name="Beletsky A.V."/>
            <person name="Ravin N.V."/>
            <person name="Dontsova O.A."/>
        </authorList>
    </citation>
    <scope>FUNCTION</scope>
</reference>
<reference key="14">
    <citation type="journal article" date="2021" name="Sci. Rep.">
        <title>Disruption of pathways regulated by Integrator complex in Galloway-Mowat syndrome due to WDR73 mutations.</title>
        <authorList>
            <person name="Tilley F.C."/>
            <person name="Arrondel C."/>
            <person name="Chhuon C."/>
            <person name="Boisson M."/>
            <person name="Cagnard N."/>
            <person name="Parisot M."/>
            <person name="Menara G."/>
            <person name="Lefort N."/>
            <person name="Guerrera I.C."/>
            <person name="Bole-Feysot C."/>
            <person name="Benmerah A."/>
            <person name="Antignac C."/>
            <person name="Mollet G."/>
        </authorList>
    </citation>
    <scope>INTERACTION WITH WDR73</scope>
</reference>
<reference evidence="26" key="15">
    <citation type="journal article" date="2017" name="Proc. Natl. Acad. Sci. U.S.A.">
        <title>Molecular basis for the interaction between Integrator subunits IntS9 and IntS11 and its functional importance.</title>
        <authorList>
            <person name="Wu Y."/>
            <person name="Albrecht T.R."/>
            <person name="Baillat D."/>
            <person name="Wagner E.J."/>
            <person name="Tong L."/>
        </authorList>
    </citation>
    <scope>X-RAY CRYSTALLOGRAPHY (2.10 ANGSTROMS) OF 581-658 IN COMPLEX WITH INTS11</scope>
    <scope>MUTAGENESIS OF 633-THR--ILE-635; 644-ARG--ARG-648 AND ARG-644</scope>
</reference>
<reference evidence="29" key="16">
    <citation type="journal article" date="2020" name="Science">
        <title>Identification of Integrator-PP2A complex (INTAC), an RNA polymerase II phosphatase.</title>
        <authorList>
            <person name="Zheng H."/>
            <person name="Qi Y."/>
            <person name="Hu S."/>
            <person name="Cao X."/>
            <person name="Xu C."/>
            <person name="Yin Z."/>
            <person name="Chen X."/>
            <person name="Li Y."/>
            <person name="Liu W."/>
            <person name="Li J."/>
            <person name="Wang J."/>
            <person name="Wei G."/>
            <person name="Liang K."/>
            <person name="Chen F.X."/>
            <person name="Xu Y."/>
        </authorList>
    </citation>
    <scope>STRUCTURE BY ELECTRON MICROSCOPY (3.50 ANGSTROMS) OF INTAC COMPLEX</scope>
    <scope>FUNCTION</scope>
    <scope>IDENTIFICATION IN THE INTAC COMPLEX</scope>
</reference>
<reference evidence="27 28" key="17">
    <citation type="journal article" date="2021" name="Mol. Cell">
        <title>Structure of the catalytic core of the Integrator complex.</title>
        <authorList>
            <person name="Pfleiderer M.M."/>
            <person name="Galej W.P."/>
        </authorList>
    </citation>
    <scope>STRUCTURE BY ELECTRON MICROSCOPY (3.56 ANGSTROMS) IN COMPLEX WITH INTS4 AND INTS11</scope>
    <scope>FUNCTION</scope>
    <scope>IDENTIFICATION IN THE INTEGRATOR COMPLEX</scope>
</reference>
<reference evidence="30" key="18">
    <citation type="journal article" date="2021" name="Science">
        <title>Structural basis of Integrator-mediated transcription regulation.</title>
        <authorList>
            <person name="Fianu I."/>
            <person name="Chen Y."/>
            <person name="Dienemann C."/>
            <person name="Dybkov O."/>
            <person name="Linden A."/>
            <person name="Urlaub H."/>
            <person name="Cramer P."/>
        </authorList>
    </citation>
    <scope>STRUCTURE BY ELECTRON MICROSCOPY (3.60 ANGSTROMS) OF INTEGRATOR COMPLEX</scope>
    <scope>IDENTIFICATION IN THE INTEGRATOR COMPLEX</scope>
</reference>
<reference evidence="31" key="19">
    <citation type="journal article" date="2023" name="Protein Cell">
        <title>Structural basis of INTAC-regulated transcription.</title>
        <authorList>
            <person name="Zheng H."/>
            <person name="Jin Q."/>
            <person name="Wang X."/>
            <person name="Qi Y."/>
            <person name="Liu W."/>
            <person name="Ren Y."/>
            <person name="Zhao D."/>
            <person name="Xavier Chen F."/>
            <person name="Cheng J."/>
            <person name="Chen X."/>
            <person name="Xu Y."/>
        </authorList>
    </citation>
    <scope>STRUCTURE BY ELECTRON MICROSCOPY (4.18 ANGSTROMS) OF INTAC COMPLEX</scope>
</reference>
<reference evidence="32 33 34" key="20">
    <citation type="journal article" date="2024" name="Mol. Cell">
        <title>Assembly mechanism of Integrator's RNA cleavage module.</title>
        <authorList>
            <person name="Sabath K."/>
            <person name="Qiu C."/>
            <person name="Jonas S."/>
        </authorList>
    </citation>
    <scope>STRUCTURE BY ELECTRON MICROSCOPY (3.90 ANGSTROMS) IN COMPLEX WITH BRAT1; WDR73; INTS4 AND INTS11</scope>
    <scope>SUBCELLULAR LOCATION</scope>
    <scope>INTERACTION WITH BRAT1 AND WDR73</scope>
    <scope>MUTAGENESIS OF SER-283 AND 566-LYS--ARG-570</scope>
</reference>
<reference evidence="38" key="21">
    <citation type="journal article" date="2024" name="Mol. Cell">
        <title>Cytoplasmic binding partners of the Integrator endonuclease INTS11 and its paralog CPSF73 are required for their nuclear function.</title>
        <authorList>
            <person name="Lin M.H."/>
            <person name="Jensen M.K."/>
            <person name="Elrod N.D."/>
            <person name="Chu H.F."/>
            <person name="Haseley M."/>
            <person name="Beam A.C."/>
            <person name="Huang K.L."/>
            <person name="Chiang W."/>
            <person name="Russell W.K."/>
            <person name="Williams K."/>
            <person name="Proschel C."/>
            <person name="Wagner E.J."/>
            <person name="Tong L."/>
        </authorList>
    </citation>
    <scope>STRUCTURE BY ELECTRON MICROSCOPY (3.21 ANGSTROMS) IN COMPLEX WITH BRAT1 AND INTS11</scope>
    <scope>IDENTIFICATION IN THE INTEGRATOR COMPLEX</scope>
    <scope>SUBCELLULAR LOCATION</scope>
    <scope>INTERACTION WITH BRAT1</scope>
    <scope>MUTAGENESIS OF 280-GLU--ARG-290 AND SER-283</scope>
</reference>
<reference evidence="35 36 37" key="22">
    <citation type="journal article" date="2024" name="Nature">
        <title>Structural basis of Integrator-dependent RNA polymerase II termination.</title>
        <authorList>
            <person name="Fianu I."/>
            <person name="Ochmann M."/>
            <person name="Walshe J.L."/>
            <person name="Dybkov O."/>
            <person name="Cruz J.N."/>
            <person name="Urlaub H."/>
            <person name="Cramer P."/>
        </authorList>
    </citation>
    <scope>STRUCTURE BY ELECTRON MICROSCOPY (3.10 ANGSTROMS) OF INTAC COMPLEX</scope>
    <scope>FUNCTION</scope>
    <scope>IDENTIFICATION IN THE INTAC COMPLEX</scope>
</reference>
<evidence type="ECO:0000250" key="1">
    <source>
        <dbReference type="UniProtKB" id="Q8K114"/>
    </source>
</evidence>
<evidence type="ECO:0000250" key="2">
    <source>
        <dbReference type="UniProtKB" id="Q95TS5"/>
    </source>
</evidence>
<evidence type="ECO:0000256" key="3">
    <source>
        <dbReference type="SAM" id="MobiDB-lite"/>
    </source>
</evidence>
<evidence type="ECO:0000269" key="4">
    <source>
    </source>
</evidence>
<evidence type="ECO:0000269" key="5">
    <source>
    </source>
</evidence>
<evidence type="ECO:0000269" key="6">
    <source>
    </source>
</evidence>
<evidence type="ECO:0000269" key="7">
    <source>
    </source>
</evidence>
<evidence type="ECO:0000269" key="8">
    <source>
    </source>
</evidence>
<evidence type="ECO:0000269" key="9">
    <source>
    </source>
</evidence>
<evidence type="ECO:0000269" key="10">
    <source>
    </source>
</evidence>
<evidence type="ECO:0000269" key="11">
    <source>
    </source>
</evidence>
<evidence type="ECO:0000269" key="12">
    <source>
    </source>
</evidence>
<evidence type="ECO:0000269" key="13">
    <source>
    </source>
</evidence>
<evidence type="ECO:0000269" key="14">
    <source>
    </source>
</evidence>
<evidence type="ECO:0000269" key="15">
    <source>
    </source>
</evidence>
<evidence type="ECO:0000269" key="16">
    <source>
    </source>
</evidence>
<evidence type="ECO:0000269" key="17">
    <source>
    </source>
</evidence>
<evidence type="ECO:0000269" key="18">
    <source>
    </source>
</evidence>
<evidence type="ECO:0000269" key="19">
    <source>
    </source>
</evidence>
<evidence type="ECO:0000269" key="20">
    <source>
    </source>
</evidence>
<evidence type="ECO:0000303" key="21">
    <source>
    </source>
</evidence>
<evidence type="ECO:0000303" key="22">
    <source>
    </source>
</evidence>
<evidence type="ECO:0000303" key="23">
    <source>
    </source>
</evidence>
<evidence type="ECO:0000305" key="24"/>
<evidence type="ECO:0000312" key="25">
    <source>
        <dbReference type="EMBL" id="BAA91867.1"/>
    </source>
</evidence>
<evidence type="ECO:0007744" key="26">
    <source>
        <dbReference type="PDB" id="5V8W"/>
    </source>
</evidence>
<evidence type="ECO:0007744" key="27">
    <source>
        <dbReference type="PDB" id="7BFP"/>
    </source>
</evidence>
<evidence type="ECO:0007744" key="28">
    <source>
        <dbReference type="PDB" id="7BFQ"/>
    </source>
</evidence>
<evidence type="ECO:0007744" key="29">
    <source>
        <dbReference type="PDB" id="7CUN"/>
    </source>
</evidence>
<evidence type="ECO:0007744" key="30">
    <source>
        <dbReference type="PDB" id="7PKS"/>
    </source>
</evidence>
<evidence type="ECO:0007744" key="31">
    <source>
        <dbReference type="PDB" id="7YCX"/>
    </source>
</evidence>
<evidence type="ECO:0007744" key="32">
    <source>
        <dbReference type="PDB" id="8R22"/>
    </source>
</evidence>
<evidence type="ECO:0007744" key="33">
    <source>
        <dbReference type="PDB" id="8R23"/>
    </source>
</evidence>
<evidence type="ECO:0007744" key="34">
    <source>
        <dbReference type="PDB" id="8R2D"/>
    </source>
</evidence>
<evidence type="ECO:0007744" key="35">
    <source>
        <dbReference type="PDB" id="8RBX"/>
    </source>
</evidence>
<evidence type="ECO:0007744" key="36">
    <source>
        <dbReference type="PDB" id="8RBZ"/>
    </source>
</evidence>
<evidence type="ECO:0007744" key="37">
    <source>
        <dbReference type="PDB" id="8RC4"/>
    </source>
</evidence>
<evidence type="ECO:0007744" key="38">
    <source>
        <dbReference type="PDB" id="8UIB"/>
    </source>
</evidence>
<evidence type="ECO:0007744" key="39">
    <source>
    </source>
</evidence>
<evidence type="ECO:0007829" key="40">
    <source>
        <dbReference type="PDB" id="5V8W"/>
    </source>
</evidence>
<evidence type="ECO:0007829" key="41">
    <source>
        <dbReference type="PDB" id="7CUN"/>
    </source>
</evidence>
<evidence type="ECO:0007829" key="42">
    <source>
        <dbReference type="PDB" id="8R23"/>
    </source>
</evidence>
<evidence type="ECO:0007829" key="43">
    <source>
        <dbReference type="PDB" id="8RC4"/>
    </source>
</evidence>
<protein>
    <recommendedName>
        <fullName evidence="24">Integrator complex subunit 9</fullName>
        <shortName>Int9</shortName>
    </recommendedName>
    <alternativeName>
        <fullName evidence="22">Protein related to CPSF subunits of 74 kDa</fullName>
        <shortName evidence="22">RC-74</shortName>
    </alternativeName>
</protein>
<dbReference type="EMBL" id="AK001733">
    <property type="protein sequence ID" value="BAA91867.1"/>
    <property type="molecule type" value="mRNA"/>
</dbReference>
<dbReference type="EMBL" id="AK298468">
    <property type="protein sequence ID" value="BAH12796.1"/>
    <property type="molecule type" value="mRNA"/>
</dbReference>
<dbReference type="EMBL" id="AK300593">
    <property type="protein sequence ID" value="BAH13311.1"/>
    <property type="molecule type" value="mRNA"/>
</dbReference>
<dbReference type="EMBL" id="AC040975">
    <property type="status" value="NOT_ANNOTATED_CDS"/>
    <property type="molecule type" value="Genomic_DNA"/>
</dbReference>
<dbReference type="EMBL" id="AC131969">
    <property type="status" value="NOT_ANNOTATED_CDS"/>
    <property type="molecule type" value="Genomic_DNA"/>
</dbReference>
<dbReference type="EMBL" id="BC025267">
    <property type="protein sequence ID" value="AAH25267.1"/>
    <property type="molecule type" value="mRNA"/>
</dbReference>
<dbReference type="EMBL" id="U96629">
    <property type="protein sequence ID" value="AAB67601.1"/>
    <property type="status" value="ALT_SEQ"/>
    <property type="molecule type" value="Genomic_DNA"/>
</dbReference>
<dbReference type="EMBL" id="BK005726">
    <property type="protein sequence ID" value="DAA05726.1"/>
    <property type="molecule type" value="mRNA"/>
</dbReference>
<dbReference type="EMBL" id="BK005674">
    <property type="protein sequence ID" value="DAA05670.1"/>
    <property type="molecule type" value="mRNA"/>
</dbReference>
<dbReference type="CCDS" id="CCDS34873.1">
    <molecule id="Q9NV88-1"/>
</dbReference>
<dbReference type="CCDS" id="CCDS55215.1">
    <molecule id="Q9NV88-3"/>
</dbReference>
<dbReference type="CCDS" id="CCDS55216.1">
    <molecule id="Q9NV88-2"/>
</dbReference>
<dbReference type="RefSeq" id="NP_001138631.1">
    <molecule id="Q9NV88-2"/>
    <property type="nucleotide sequence ID" value="NM_001145159.3"/>
</dbReference>
<dbReference type="RefSeq" id="NP_001166033.1">
    <molecule id="Q9NV88-3"/>
    <property type="nucleotide sequence ID" value="NM_001172562.2"/>
</dbReference>
<dbReference type="RefSeq" id="NP_060720.2">
    <molecule id="Q9NV88-1"/>
    <property type="nucleotide sequence ID" value="NM_018250.4"/>
</dbReference>
<dbReference type="PDB" id="5V8W">
    <property type="method" value="X-ray"/>
    <property type="resolution" value="2.10 A"/>
    <property type="chains" value="A/C/E/G=581-658"/>
</dbReference>
<dbReference type="PDB" id="7BFP">
    <property type="method" value="EM"/>
    <property type="resolution" value="3.50 A"/>
    <property type="chains" value="A=1-658"/>
</dbReference>
<dbReference type="PDB" id="7BFQ">
    <property type="method" value="EM"/>
    <property type="resolution" value="3.50 A"/>
    <property type="chains" value="A=1-658"/>
</dbReference>
<dbReference type="PDB" id="7CUN">
    <property type="method" value="EM"/>
    <property type="resolution" value="3.50 A"/>
    <property type="chains" value="I=1-658"/>
</dbReference>
<dbReference type="PDB" id="7PKS">
    <property type="method" value="EM"/>
    <property type="resolution" value="3.60 A"/>
    <property type="chains" value="i=1-658"/>
</dbReference>
<dbReference type="PDB" id="7YCX">
    <property type="method" value="EM"/>
    <property type="resolution" value="4.18 A"/>
    <property type="chains" value="I=1-658"/>
</dbReference>
<dbReference type="PDB" id="8R22">
    <property type="method" value="EM"/>
    <property type="resolution" value="3.90 A"/>
    <property type="chains" value="B=1-658"/>
</dbReference>
<dbReference type="PDB" id="8R23">
    <property type="method" value="EM"/>
    <property type="resolution" value="3.20 A"/>
    <property type="chains" value="B=1-658"/>
</dbReference>
<dbReference type="PDB" id="8R2D">
    <property type="method" value="EM"/>
    <property type="resolution" value="3.90 A"/>
    <property type="chains" value="B=1-658"/>
</dbReference>
<dbReference type="PDB" id="8RBX">
    <property type="method" value="EM"/>
    <property type="resolution" value="4.10 A"/>
    <property type="chains" value="i=1-658"/>
</dbReference>
<dbReference type="PDB" id="8RBZ">
    <property type="method" value="EM"/>
    <property type="resolution" value="3.70 A"/>
    <property type="chains" value="i=1-658"/>
</dbReference>
<dbReference type="PDB" id="8RC4">
    <property type="method" value="EM"/>
    <property type="resolution" value="3.10 A"/>
    <property type="chains" value="i=1-658"/>
</dbReference>
<dbReference type="PDB" id="8UIB">
    <property type="method" value="EM"/>
    <property type="resolution" value="3.21 A"/>
    <property type="chains" value="I=1-658"/>
</dbReference>
<dbReference type="PDB" id="8YJB">
    <property type="method" value="EM"/>
    <property type="resolution" value="4.10 A"/>
    <property type="chains" value="I=1-658"/>
</dbReference>
<dbReference type="PDBsum" id="5V8W"/>
<dbReference type="PDBsum" id="7BFP"/>
<dbReference type="PDBsum" id="7BFQ"/>
<dbReference type="PDBsum" id="7CUN"/>
<dbReference type="PDBsum" id="7PKS"/>
<dbReference type="PDBsum" id="7YCX"/>
<dbReference type="PDBsum" id="8R22"/>
<dbReference type="PDBsum" id="8R23"/>
<dbReference type="PDBsum" id="8R2D"/>
<dbReference type="PDBsum" id="8RBX"/>
<dbReference type="PDBsum" id="8RBZ"/>
<dbReference type="PDBsum" id="8RC4"/>
<dbReference type="PDBsum" id="8UIB"/>
<dbReference type="PDBsum" id="8YJB"/>
<dbReference type="EMDB" id="EMD-12159"/>
<dbReference type="EMDB" id="EMD-12163"/>
<dbReference type="EMDB" id="EMD-12164"/>
<dbReference type="EMDB" id="EMD-12165"/>
<dbReference type="EMDB" id="EMD-12166"/>
<dbReference type="EMDB" id="EMD-13479"/>
<dbReference type="EMDB" id="EMD-18833"/>
<dbReference type="EMDB" id="EMD-18834"/>
<dbReference type="EMDB" id="EMD-18839"/>
<dbReference type="EMDB" id="EMD-19038"/>
<dbReference type="EMDB" id="EMD-19040"/>
<dbReference type="EMDB" id="EMD-19047"/>
<dbReference type="EMDB" id="EMD-30473"/>
<dbReference type="EMDB" id="EMD-33741"/>
<dbReference type="EMDB" id="EMD-39338"/>
<dbReference type="EMDB" id="EMD-42291"/>
<dbReference type="SMR" id="Q9NV88"/>
<dbReference type="BioGRID" id="120874">
    <property type="interactions" value="92"/>
</dbReference>
<dbReference type="ComplexPortal" id="CPX-6441">
    <property type="entry name" value="Integrator complex"/>
</dbReference>
<dbReference type="CORUM" id="Q9NV88"/>
<dbReference type="FunCoup" id="Q9NV88">
    <property type="interactions" value="4588"/>
</dbReference>
<dbReference type="IntAct" id="Q9NV88">
    <property type="interactions" value="42"/>
</dbReference>
<dbReference type="MINT" id="Q9NV88"/>
<dbReference type="STRING" id="9606.ENSP00000429065"/>
<dbReference type="iPTMnet" id="Q9NV88"/>
<dbReference type="PhosphoSitePlus" id="Q9NV88"/>
<dbReference type="BioMuta" id="INTS9"/>
<dbReference type="DMDM" id="119371246"/>
<dbReference type="jPOST" id="Q9NV88"/>
<dbReference type="MassIVE" id="Q9NV88"/>
<dbReference type="PaxDb" id="9606-ENSP00000429065"/>
<dbReference type="PeptideAtlas" id="Q9NV88"/>
<dbReference type="ProteomicsDB" id="6659"/>
<dbReference type="ProteomicsDB" id="82760">
    <molecule id="Q9NV88-1"/>
</dbReference>
<dbReference type="ProteomicsDB" id="82761">
    <molecule id="Q9NV88-2"/>
</dbReference>
<dbReference type="Pumba" id="Q9NV88"/>
<dbReference type="Antibodypedia" id="23131">
    <property type="antibodies" value="136 antibodies from 23 providers"/>
</dbReference>
<dbReference type="DNASU" id="55756"/>
<dbReference type="Ensembl" id="ENST00000416984.6">
    <molecule id="Q9NV88-2"/>
    <property type="protein sequence ID" value="ENSP00000398208.2"/>
    <property type="gene ID" value="ENSG00000104299.15"/>
</dbReference>
<dbReference type="Ensembl" id="ENST00000521022.6">
    <molecule id="Q9NV88-1"/>
    <property type="protein sequence ID" value="ENSP00000429065.1"/>
    <property type="gene ID" value="ENSG00000104299.15"/>
</dbReference>
<dbReference type="Ensembl" id="ENST00000521777.5">
    <molecule id="Q9NV88-3"/>
    <property type="protein sequence ID" value="ENSP00000430943.1"/>
    <property type="gene ID" value="ENSG00000104299.15"/>
</dbReference>
<dbReference type="GeneID" id="55756"/>
<dbReference type="KEGG" id="hsa:55756"/>
<dbReference type="MANE-Select" id="ENST00000521022.6">
    <property type="protein sequence ID" value="ENSP00000429065.1"/>
    <property type="RefSeq nucleotide sequence ID" value="NM_018250.4"/>
    <property type="RefSeq protein sequence ID" value="NP_060720.2"/>
</dbReference>
<dbReference type="UCSC" id="uc003xha.4">
    <molecule id="Q9NV88-1"/>
    <property type="organism name" value="human"/>
</dbReference>
<dbReference type="AGR" id="HGNC:25592"/>
<dbReference type="CTD" id="55756"/>
<dbReference type="DisGeNET" id="55756"/>
<dbReference type="GeneCards" id="INTS9"/>
<dbReference type="HGNC" id="HGNC:25592">
    <property type="gene designation" value="INTS9"/>
</dbReference>
<dbReference type="HPA" id="ENSG00000104299">
    <property type="expression patterns" value="Low tissue specificity"/>
</dbReference>
<dbReference type="MIM" id="611352">
    <property type="type" value="gene"/>
</dbReference>
<dbReference type="neXtProt" id="NX_Q9NV88"/>
<dbReference type="OpenTargets" id="ENSG00000104299"/>
<dbReference type="PharmGKB" id="PA162392192"/>
<dbReference type="VEuPathDB" id="HostDB:ENSG00000104299"/>
<dbReference type="eggNOG" id="KOG1138">
    <property type="taxonomic scope" value="Eukaryota"/>
</dbReference>
<dbReference type="GeneTree" id="ENSGT00390000001445"/>
<dbReference type="InParanoid" id="Q9NV88"/>
<dbReference type="OMA" id="AMKAVHC"/>
<dbReference type="OrthoDB" id="5600060at2759"/>
<dbReference type="PAN-GO" id="Q9NV88">
    <property type="GO annotations" value="2 GO annotations based on evolutionary models"/>
</dbReference>
<dbReference type="PhylomeDB" id="Q9NV88"/>
<dbReference type="TreeFam" id="TF314100"/>
<dbReference type="PathwayCommons" id="Q9NV88"/>
<dbReference type="Reactome" id="R-HSA-6807505">
    <property type="pathway name" value="RNA polymerase II transcribes snRNA genes"/>
</dbReference>
<dbReference type="SignaLink" id="Q9NV88"/>
<dbReference type="SIGNOR" id="Q9NV88"/>
<dbReference type="BioGRID-ORCS" id="55756">
    <property type="hits" value="827 hits in 1164 CRISPR screens"/>
</dbReference>
<dbReference type="ChiTaRS" id="INTS9">
    <property type="organism name" value="human"/>
</dbReference>
<dbReference type="GeneWiki" id="INTS9"/>
<dbReference type="GenomeRNAi" id="55756"/>
<dbReference type="Pharos" id="Q9NV88">
    <property type="development level" value="Tbio"/>
</dbReference>
<dbReference type="PRO" id="PR:Q9NV88"/>
<dbReference type="Proteomes" id="UP000005640">
    <property type="component" value="Chromosome 8"/>
</dbReference>
<dbReference type="RNAct" id="Q9NV88">
    <property type="molecule type" value="protein"/>
</dbReference>
<dbReference type="Bgee" id="ENSG00000104299">
    <property type="expression patterns" value="Expressed in secondary oocyte and 147 other cell types or tissues"/>
</dbReference>
<dbReference type="ExpressionAtlas" id="Q9NV88">
    <property type="expression patterns" value="baseline and differential"/>
</dbReference>
<dbReference type="GO" id="GO:0005737">
    <property type="term" value="C:cytoplasm"/>
    <property type="evidence" value="ECO:0000314"/>
    <property type="project" value="UniProtKB"/>
</dbReference>
<dbReference type="GO" id="GO:0005829">
    <property type="term" value="C:cytosol"/>
    <property type="evidence" value="ECO:0000314"/>
    <property type="project" value="HPA"/>
</dbReference>
<dbReference type="GO" id="GO:0160232">
    <property type="term" value="C:INTAC complex"/>
    <property type="evidence" value="ECO:0000314"/>
    <property type="project" value="UniProtKB"/>
</dbReference>
<dbReference type="GO" id="GO:0032039">
    <property type="term" value="C:integrator complex"/>
    <property type="evidence" value="ECO:0000314"/>
    <property type="project" value="UniProtKB"/>
</dbReference>
<dbReference type="GO" id="GO:0005654">
    <property type="term" value="C:nucleoplasm"/>
    <property type="evidence" value="ECO:0000314"/>
    <property type="project" value="HPA"/>
</dbReference>
<dbReference type="GO" id="GO:0005634">
    <property type="term" value="C:nucleus"/>
    <property type="evidence" value="ECO:0000314"/>
    <property type="project" value="UniProtKB"/>
</dbReference>
<dbReference type="GO" id="GO:0030512">
    <property type="term" value="P:negative regulation of transforming growth factor beta receptor signaling pathway"/>
    <property type="evidence" value="ECO:0000315"/>
    <property type="project" value="FlyBase"/>
</dbReference>
<dbReference type="GO" id="GO:0034243">
    <property type="term" value="P:regulation of transcription elongation by RNA polymerase II"/>
    <property type="evidence" value="ECO:0000303"/>
    <property type="project" value="ComplexPortal"/>
</dbReference>
<dbReference type="GO" id="GO:0160240">
    <property type="term" value="P:RNA polymerase II transcription initiation surveillance"/>
    <property type="evidence" value="ECO:0000314"/>
    <property type="project" value="UniProtKB"/>
</dbReference>
<dbReference type="GO" id="GO:0034472">
    <property type="term" value="P:snRNA 3'-end processing"/>
    <property type="evidence" value="ECO:0000314"/>
    <property type="project" value="UniProtKB"/>
</dbReference>
<dbReference type="GO" id="GO:0016180">
    <property type="term" value="P:snRNA processing"/>
    <property type="evidence" value="ECO:0000314"/>
    <property type="project" value="HGNC-UCL"/>
</dbReference>
<dbReference type="CDD" id="cd16294">
    <property type="entry name" value="Int9-like_MBL-fold"/>
    <property type="match status" value="1"/>
</dbReference>
<dbReference type="FunFam" id="3.40.50.10890:FF:000003">
    <property type="entry name" value="Integrator complex subunit 9"/>
    <property type="match status" value="1"/>
</dbReference>
<dbReference type="Gene3D" id="3.40.50.10890">
    <property type="match status" value="1"/>
</dbReference>
<dbReference type="Gene3D" id="3.60.15.10">
    <property type="entry name" value="Ribonuclease Z/Hydroxyacylglutathione hydrolase-like"/>
    <property type="match status" value="1"/>
</dbReference>
<dbReference type="InterPro" id="IPR022712">
    <property type="entry name" value="Beta_Casp"/>
</dbReference>
<dbReference type="InterPro" id="IPR027074">
    <property type="entry name" value="Integrator_9su"/>
</dbReference>
<dbReference type="InterPro" id="IPR048660">
    <property type="entry name" value="IntS9-like_C"/>
</dbReference>
<dbReference type="InterPro" id="IPR001279">
    <property type="entry name" value="Metallo-B-lactamas"/>
</dbReference>
<dbReference type="InterPro" id="IPR036866">
    <property type="entry name" value="RibonucZ/Hydroxyglut_hydro"/>
</dbReference>
<dbReference type="PANTHER" id="PTHR46094">
    <property type="entry name" value="INTEGRATOR COMPLEX SUBUNIT 9"/>
    <property type="match status" value="1"/>
</dbReference>
<dbReference type="PANTHER" id="PTHR46094:SF1">
    <property type="entry name" value="INTEGRATOR COMPLEX SUBUNIT 9"/>
    <property type="match status" value="1"/>
</dbReference>
<dbReference type="Pfam" id="PF10996">
    <property type="entry name" value="Beta-Casp"/>
    <property type="match status" value="1"/>
</dbReference>
<dbReference type="Pfam" id="PF21382">
    <property type="entry name" value="IntS9_C"/>
    <property type="match status" value="1"/>
</dbReference>
<dbReference type="Pfam" id="PF16661">
    <property type="entry name" value="Lactamase_B_6"/>
    <property type="match status" value="1"/>
</dbReference>
<dbReference type="SMART" id="SM01027">
    <property type="entry name" value="Beta-Casp"/>
    <property type="match status" value="1"/>
</dbReference>
<dbReference type="SUPFAM" id="SSF56281">
    <property type="entry name" value="Metallo-hydrolase/oxidoreductase"/>
    <property type="match status" value="1"/>
</dbReference>
<gene>
    <name evidence="23 25" type="primary">INTS9</name>
    <name evidence="22" type="synonym">RC74</name>
</gene>